<keyword id="KW-0227">DNA damage</keyword>
<keyword id="KW-0234">DNA repair</keyword>
<keyword id="KW-0235">DNA replication</keyword>
<keyword id="KW-0436">Ligase</keyword>
<keyword id="KW-0460">Magnesium</keyword>
<keyword id="KW-0464">Manganese</keyword>
<keyword id="KW-0479">Metal-binding</keyword>
<keyword id="KW-0520">NAD</keyword>
<keyword id="KW-1185">Reference proteome</keyword>
<keyword id="KW-0862">Zinc</keyword>
<evidence type="ECO:0000255" key="1">
    <source>
        <dbReference type="HAMAP-Rule" id="MF_01588"/>
    </source>
</evidence>
<sequence>MDAGERIRELADRIVELRTAYYEGAPLVADAEYDAVEDELRALIAAHPELAPDPNPLDQVGAPAVLHAPVRHSRPMLSLEKATTPEQVAAFFERFPGQPVVVMPKLDGLSLALVYEDGRLVRAVTRGDGTTGDDVTMLVRALVDGVPEQIDVPGRVEVRGEAVMLRSTFLAYNAAHPDKPLINPRNAAAGTLRAKDPATVAERRLRFFGFDLDTAEGGAAADLGEGLRALGIAGAAMRMCADAEQAQAAITDIERGRNDLDYDIDGAVLRLADRDAYAAAGTRSNSPRGALAFKFAAEEKTTVLEAVTWDVGKTGKIVPVARLEPVFVGGTTVTKATLANQQVIRARDIKVGDTVLVRRAGDVIPFVAGVLDASKRTGAEVEIVPPTECPSCGQPVTEQGNSRELFCTNASCPAQTVRRLIHWASRAAADIDAIGGVWIERLAEAGILENPSDFYTLTKERLLEFDRIGEVSATRMIESIDRSRDVGLRRALIGLAIPMASEGTAARLARAGFASLEEVADAGEERLVAVEDIGPKVAASLVEHLTRLRPELERLRERGVSLDVREEDLPPVVAAGAPLAGKTVVVTGAISDPRSGEKVARPTFQRLCEKAGATAASSVSANTDLLITGAGVGESKLAKAEKLGVEIVDQATIWAQLIEAKLV</sequence>
<gene>
    <name evidence="1" type="primary">ligA1</name>
    <name type="ordered locus">NFA_29070</name>
</gene>
<accession>Q5YVN7</accession>
<dbReference type="EC" id="6.5.1.2" evidence="1"/>
<dbReference type="EMBL" id="AP006618">
    <property type="protein sequence ID" value="BAD57754.1"/>
    <property type="molecule type" value="Genomic_DNA"/>
</dbReference>
<dbReference type="RefSeq" id="WP_011209439.1">
    <property type="nucleotide sequence ID" value="NC_006361.1"/>
</dbReference>
<dbReference type="SMR" id="Q5YVN7"/>
<dbReference type="STRING" id="247156.NFA_29070"/>
<dbReference type="GeneID" id="61133630"/>
<dbReference type="KEGG" id="nfa:NFA_29070"/>
<dbReference type="eggNOG" id="COG0272">
    <property type="taxonomic scope" value="Bacteria"/>
</dbReference>
<dbReference type="HOGENOM" id="CLU_007764_2_0_11"/>
<dbReference type="OrthoDB" id="9759736at2"/>
<dbReference type="Proteomes" id="UP000006820">
    <property type="component" value="Chromosome"/>
</dbReference>
<dbReference type="GO" id="GO:0003677">
    <property type="term" value="F:DNA binding"/>
    <property type="evidence" value="ECO:0007669"/>
    <property type="project" value="InterPro"/>
</dbReference>
<dbReference type="GO" id="GO:0003911">
    <property type="term" value="F:DNA ligase (NAD+) activity"/>
    <property type="evidence" value="ECO:0007669"/>
    <property type="project" value="UniProtKB-UniRule"/>
</dbReference>
<dbReference type="GO" id="GO:0046872">
    <property type="term" value="F:metal ion binding"/>
    <property type="evidence" value="ECO:0007669"/>
    <property type="project" value="UniProtKB-KW"/>
</dbReference>
<dbReference type="GO" id="GO:0006281">
    <property type="term" value="P:DNA repair"/>
    <property type="evidence" value="ECO:0007669"/>
    <property type="project" value="UniProtKB-KW"/>
</dbReference>
<dbReference type="GO" id="GO:0006260">
    <property type="term" value="P:DNA replication"/>
    <property type="evidence" value="ECO:0007669"/>
    <property type="project" value="UniProtKB-KW"/>
</dbReference>
<dbReference type="CDD" id="cd17748">
    <property type="entry name" value="BRCT_DNA_ligase_like"/>
    <property type="match status" value="1"/>
</dbReference>
<dbReference type="Gene3D" id="6.20.10.30">
    <property type="match status" value="1"/>
</dbReference>
<dbReference type="Gene3D" id="1.10.150.20">
    <property type="entry name" value="5' to 3' exonuclease, C-terminal subdomain"/>
    <property type="match status" value="2"/>
</dbReference>
<dbReference type="Gene3D" id="3.40.50.10190">
    <property type="entry name" value="BRCT domain"/>
    <property type="match status" value="1"/>
</dbReference>
<dbReference type="Gene3D" id="3.30.470.30">
    <property type="entry name" value="DNA ligase/mRNA capping enzyme"/>
    <property type="match status" value="1"/>
</dbReference>
<dbReference type="Gene3D" id="1.10.287.610">
    <property type="entry name" value="Helix hairpin bin"/>
    <property type="match status" value="1"/>
</dbReference>
<dbReference type="Gene3D" id="2.40.50.140">
    <property type="entry name" value="Nucleic acid-binding proteins"/>
    <property type="match status" value="1"/>
</dbReference>
<dbReference type="HAMAP" id="MF_01588">
    <property type="entry name" value="DNA_ligase_A"/>
    <property type="match status" value="1"/>
</dbReference>
<dbReference type="InterPro" id="IPR001357">
    <property type="entry name" value="BRCT_dom"/>
</dbReference>
<dbReference type="InterPro" id="IPR036420">
    <property type="entry name" value="BRCT_dom_sf"/>
</dbReference>
<dbReference type="InterPro" id="IPR041663">
    <property type="entry name" value="DisA/LigA_HHH"/>
</dbReference>
<dbReference type="InterPro" id="IPR001679">
    <property type="entry name" value="DNA_ligase"/>
</dbReference>
<dbReference type="InterPro" id="IPR018239">
    <property type="entry name" value="DNA_ligase_AS"/>
</dbReference>
<dbReference type="InterPro" id="IPR013839">
    <property type="entry name" value="DNAligase_adenylation"/>
</dbReference>
<dbReference type="InterPro" id="IPR013840">
    <property type="entry name" value="DNAligase_N"/>
</dbReference>
<dbReference type="InterPro" id="IPR003583">
    <property type="entry name" value="Hlx-hairpin-Hlx_DNA-bd_motif"/>
</dbReference>
<dbReference type="InterPro" id="IPR012340">
    <property type="entry name" value="NA-bd_OB-fold"/>
</dbReference>
<dbReference type="InterPro" id="IPR004150">
    <property type="entry name" value="NAD_DNA_ligase_OB"/>
</dbReference>
<dbReference type="InterPro" id="IPR010994">
    <property type="entry name" value="RuvA_2-like"/>
</dbReference>
<dbReference type="NCBIfam" id="TIGR00575">
    <property type="entry name" value="dnlj"/>
    <property type="match status" value="1"/>
</dbReference>
<dbReference type="NCBIfam" id="NF005932">
    <property type="entry name" value="PRK07956.1"/>
    <property type="match status" value="1"/>
</dbReference>
<dbReference type="Pfam" id="PF01653">
    <property type="entry name" value="DNA_ligase_aden"/>
    <property type="match status" value="1"/>
</dbReference>
<dbReference type="Pfam" id="PF03120">
    <property type="entry name" value="DNA_ligase_OB"/>
    <property type="match status" value="1"/>
</dbReference>
<dbReference type="Pfam" id="PF12826">
    <property type="entry name" value="HHH_2"/>
    <property type="match status" value="1"/>
</dbReference>
<dbReference type="PIRSF" id="PIRSF001604">
    <property type="entry name" value="LigA"/>
    <property type="match status" value="1"/>
</dbReference>
<dbReference type="SMART" id="SM00292">
    <property type="entry name" value="BRCT"/>
    <property type="match status" value="1"/>
</dbReference>
<dbReference type="SMART" id="SM00278">
    <property type="entry name" value="HhH1"/>
    <property type="match status" value="2"/>
</dbReference>
<dbReference type="SMART" id="SM00532">
    <property type="entry name" value="LIGANc"/>
    <property type="match status" value="1"/>
</dbReference>
<dbReference type="SUPFAM" id="SSF52113">
    <property type="entry name" value="BRCT domain"/>
    <property type="match status" value="1"/>
</dbReference>
<dbReference type="SUPFAM" id="SSF56091">
    <property type="entry name" value="DNA ligase/mRNA capping enzyme, catalytic domain"/>
    <property type="match status" value="1"/>
</dbReference>
<dbReference type="SUPFAM" id="SSF50249">
    <property type="entry name" value="Nucleic acid-binding proteins"/>
    <property type="match status" value="1"/>
</dbReference>
<dbReference type="SUPFAM" id="SSF47781">
    <property type="entry name" value="RuvA domain 2-like"/>
    <property type="match status" value="1"/>
</dbReference>
<dbReference type="PROSITE" id="PS50172">
    <property type="entry name" value="BRCT"/>
    <property type="match status" value="1"/>
</dbReference>
<dbReference type="PROSITE" id="PS01055">
    <property type="entry name" value="DNA_LIGASE_N1"/>
    <property type="match status" value="1"/>
</dbReference>
<protein>
    <recommendedName>
        <fullName evidence="1">DNA ligase 1</fullName>
        <ecNumber evidence="1">6.5.1.2</ecNumber>
    </recommendedName>
    <alternativeName>
        <fullName evidence="1">Polydeoxyribonucleotide synthase [NAD(+)] 1</fullName>
    </alternativeName>
</protein>
<comment type="function">
    <text evidence="1">DNA ligase that catalyzes the formation of phosphodiester linkages between 5'-phosphoryl and 3'-hydroxyl groups in double-stranded DNA using NAD as a coenzyme and as the energy source for the reaction. It is essential for DNA replication and repair of damaged DNA.</text>
</comment>
<comment type="catalytic activity">
    <reaction evidence="1">
        <text>NAD(+) + (deoxyribonucleotide)n-3'-hydroxyl + 5'-phospho-(deoxyribonucleotide)m = (deoxyribonucleotide)n+m + AMP + beta-nicotinamide D-nucleotide.</text>
        <dbReference type="EC" id="6.5.1.2"/>
    </reaction>
</comment>
<comment type="cofactor">
    <cofactor evidence="1">
        <name>Mg(2+)</name>
        <dbReference type="ChEBI" id="CHEBI:18420"/>
    </cofactor>
    <cofactor evidence="1">
        <name>Mn(2+)</name>
        <dbReference type="ChEBI" id="CHEBI:29035"/>
    </cofactor>
</comment>
<comment type="similarity">
    <text evidence="1">Belongs to the NAD-dependent DNA ligase family. LigA subfamily.</text>
</comment>
<reference key="1">
    <citation type="journal article" date="2004" name="Proc. Natl. Acad. Sci. U.S.A.">
        <title>The complete genomic sequence of Nocardia farcinica IFM 10152.</title>
        <authorList>
            <person name="Ishikawa J."/>
            <person name="Yamashita A."/>
            <person name="Mikami Y."/>
            <person name="Hoshino Y."/>
            <person name="Kurita H."/>
            <person name="Hotta K."/>
            <person name="Shiba T."/>
            <person name="Hattori M."/>
        </authorList>
    </citation>
    <scope>NUCLEOTIDE SEQUENCE [LARGE SCALE GENOMIC DNA]</scope>
    <source>
        <strain>IFM 10152</strain>
    </source>
</reference>
<organism>
    <name type="scientific">Nocardia farcinica (strain IFM 10152)</name>
    <dbReference type="NCBI Taxonomy" id="247156"/>
    <lineage>
        <taxon>Bacteria</taxon>
        <taxon>Bacillati</taxon>
        <taxon>Actinomycetota</taxon>
        <taxon>Actinomycetes</taxon>
        <taxon>Mycobacteriales</taxon>
        <taxon>Nocardiaceae</taxon>
        <taxon>Nocardia</taxon>
    </lineage>
</organism>
<feature type="chain" id="PRO_0000313342" description="DNA ligase 1">
    <location>
        <begin position="1"/>
        <end position="663"/>
    </location>
</feature>
<feature type="domain" description="BRCT" evidence="1">
    <location>
        <begin position="574"/>
        <end position="663"/>
    </location>
</feature>
<feature type="active site" description="N6-AMP-lysine intermediate" evidence="1">
    <location>
        <position position="105"/>
    </location>
</feature>
<feature type="binding site" evidence="1">
    <location>
        <begin position="30"/>
        <end position="34"/>
    </location>
    <ligand>
        <name>NAD(+)</name>
        <dbReference type="ChEBI" id="CHEBI:57540"/>
    </ligand>
</feature>
<feature type="binding site" evidence="1">
    <location>
        <begin position="78"/>
        <end position="79"/>
    </location>
    <ligand>
        <name>NAD(+)</name>
        <dbReference type="ChEBI" id="CHEBI:57540"/>
    </ligand>
</feature>
<feature type="binding site" evidence="1">
    <location>
        <position position="126"/>
    </location>
    <ligand>
        <name>NAD(+)</name>
        <dbReference type="ChEBI" id="CHEBI:57540"/>
    </ligand>
</feature>
<feature type="binding site" evidence="1">
    <location>
        <position position="161"/>
    </location>
    <ligand>
        <name>NAD(+)</name>
        <dbReference type="ChEBI" id="CHEBI:57540"/>
    </ligand>
</feature>
<feature type="binding site" evidence="1">
    <location>
        <position position="294"/>
    </location>
    <ligand>
        <name>NAD(+)</name>
        <dbReference type="ChEBI" id="CHEBI:57540"/>
    </ligand>
</feature>
<feature type="binding site" evidence="1">
    <location>
        <position position="389"/>
    </location>
    <ligand>
        <name>Zn(2+)</name>
        <dbReference type="ChEBI" id="CHEBI:29105"/>
    </ligand>
</feature>
<feature type="binding site" evidence="1">
    <location>
        <position position="392"/>
    </location>
    <ligand>
        <name>Zn(2+)</name>
        <dbReference type="ChEBI" id="CHEBI:29105"/>
    </ligand>
</feature>
<feature type="binding site" evidence="1">
    <location>
        <position position="407"/>
    </location>
    <ligand>
        <name>Zn(2+)</name>
        <dbReference type="ChEBI" id="CHEBI:29105"/>
    </ligand>
</feature>
<feature type="binding site" evidence="1">
    <location>
        <position position="412"/>
    </location>
    <ligand>
        <name>Zn(2+)</name>
        <dbReference type="ChEBI" id="CHEBI:29105"/>
    </ligand>
</feature>
<proteinExistence type="inferred from homology"/>
<name>DNLJ1_NOCFA</name>